<name>RUMI_DROPS</name>
<proteinExistence type="inferred from homology"/>
<gene>
    <name evidence="1" type="primary">rumi</name>
    <name type="ORF">GA16050</name>
</gene>
<keyword id="KW-1015">Disulfide bond</keyword>
<keyword id="KW-0256">Endoplasmic reticulum</keyword>
<keyword id="KW-0328">Glycosyltransferase</keyword>
<keyword id="KW-0914">Notch signaling pathway</keyword>
<keyword id="KW-1185">Reference proteome</keyword>
<keyword id="KW-0732">Signal</keyword>
<keyword id="KW-0808">Transferase</keyword>
<feature type="signal peptide" evidence="2">
    <location>
        <begin position="1"/>
        <end position="20"/>
    </location>
</feature>
<feature type="chain" id="PRO_0000342688" description="O-glucosyltransferase rumi" evidence="2">
    <location>
        <begin position="21"/>
        <end position="409"/>
    </location>
</feature>
<feature type="region of interest" description="Interaction with the consensus sequence C-X-S-X-[PA]-C in peptide substrates" evidence="1">
    <location>
        <begin position="190"/>
        <end position="195"/>
    </location>
</feature>
<feature type="short sequence motif" description="Prevents secretion from ER" evidence="2">
    <location>
        <begin position="406"/>
        <end position="409"/>
    </location>
</feature>
<feature type="active site" description="Proton donor/acceptor" evidence="1">
    <location>
        <position position="149"/>
    </location>
</feature>
<feature type="binding site" evidence="1">
    <location>
        <begin position="227"/>
        <end position="231"/>
    </location>
    <ligand>
        <name>UDP-alpha-D-glucose</name>
        <dbReference type="ChEBI" id="CHEBI:58885"/>
    </ligand>
</feature>
<feature type="binding site" evidence="1">
    <location>
        <position position="235"/>
    </location>
    <ligand>
        <name>UDP-alpha-D-glucose</name>
        <dbReference type="ChEBI" id="CHEBI:58885"/>
    </ligand>
</feature>
<feature type="binding site" evidence="1">
    <location>
        <begin position="274"/>
        <end position="276"/>
    </location>
    <ligand>
        <name>UDP-alpha-D-glucose</name>
        <dbReference type="ChEBI" id="CHEBI:58885"/>
    </ligand>
</feature>
<feature type="binding site" evidence="1">
    <location>
        <begin position="292"/>
        <end position="296"/>
    </location>
    <ligand>
        <name>UDP-alpha-D-glucose</name>
        <dbReference type="ChEBI" id="CHEBI:58885"/>
    </ligand>
</feature>
<feature type="site" description="Interaction with the consensus sequence C-X-S-X-[PA]-C in peptide substrates" evidence="1">
    <location>
        <position position="120"/>
    </location>
</feature>
<feature type="site" description="Interaction with the consensus sequence C-X-S-X-[PA]-C in peptide substrates" evidence="1">
    <location>
        <position position="230"/>
    </location>
</feature>
<feature type="site" description="Interaction with the consensus sequence C-X-S-X-[PA]-C in peptide substrates" evidence="1">
    <location>
        <position position="257"/>
    </location>
</feature>
<feature type="disulfide bond" evidence="1">
    <location>
        <begin position="62"/>
        <end position="73"/>
    </location>
</feature>
<feature type="disulfide bond" evidence="1">
    <location>
        <begin position="71"/>
        <end position="376"/>
    </location>
</feature>
<feature type="disulfide bond" evidence="1">
    <location>
        <begin position="118"/>
        <end position="124"/>
    </location>
</feature>
<feature type="disulfide bond" evidence="1">
    <location>
        <begin position="280"/>
        <end position="303"/>
    </location>
</feature>
<protein>
    <recommendedName>
        <fullName>O-glucosyltransferase rumi</fullName>
        <ecNumber evidence="1">2.4.1.-</ecNumber>
    </recommendedName>
</protein>
<sequence>MLINVVLIILLVGLNGKASGQNQGLCSPDENASCADSSDTQDEFSFNILRKIKKALASYQPCSSDANDANCSCHAAVIKSDLAPYKATGVSRQMIESSARYGTRYKIYEKRLYREENCMFPARCQGIEHFLLPLVATLPDMDLVINTRDYPQINMAWGNGAQGPILSFSKTKDHRDIMYPAWTFWAGGPATKLHPRGIGRWDLMREKLEKRAAAIPWSQKRELGFFRGSRTSDERDSLILLSRRNPELVEAQYTKNQGWKSPKDTLDAPPAGEVSFEDHCKYKYLFNFRGVAASFRLKHLFLCQSLVFHVGDEWQEFFYDQLKPWVHYVPLKNYPSQQEYEELLTFFRKNDALAQEIAQRGRDFIWQHLRMKDIKCYWRRLLKSYVKLLTYEVQPEDQLIHIQPAKDEL</sequence>
<reference evidence="5" key="1">
    <citation type="journal article" date="2005" name="Genome Res.">
        <title>Comparative genome sequencing of Drosophila pseudoobscura: chromosomal, gene, and cis-element evolution.</title>
        <authorList>
            <person name="Richards S."/>
            <person name="Liu Y."/>
            <person name="Bettencourt B.R."/>
            <person name="Hradecky P."/>
            <person name="Letovsky S."/>
            <person name="Nielsen R."/>
            <person name="Thornton K."/>
            <person name="Hubisz M.J."/>
            <person name="Chen R."/>
            <person name="Meisel R.P."/>
            <person name="Couronne O."/>
            <person name="Hua S."/>
            <person name="Smith M.A."/>
            <person name="Zhang P."/>
            <person name="Liu J."/>
            <person name="Bussemaker H.J."/>
            <person name="van Batenburg M.F."/>
            <person name="Howells S.L."/>
            <person name="Scherer S.E."/>
            <person name="Sodergren E."/>
            <person name="Matthews B.B."/>
            <person name="Crosby M.A."/>
            <person name="Schroeder A.J."/>
            <person name="Ortiz-Barrientos D."/>
            <person name="Rives C.M."/>
            <person name="Metzker M.L."/>
            <person name="Muzny D.M."/>
            <person name="Scott G."/>
            <person name="Steffen D."/>
            <person name="Wheeler D.A."/>
            <person name="Worley K.C."/>
            <person name="Havlak P."/>
            <person name="Durbin K.J."/>
            <person name="Egan A."/>
            <person name="Gill R."/>
            <person name="Hume J."/>
            <person name="Morgan M.B."/>
            <person name="Miner G."/>
            <person name="Hamilton C."/>
            <person name="Huang Y."/>
            <person name="Waldron L."/>
            <person name="Verduzco D."/>
            <person name="Clerc-Blankenburg K.P."/>
            <person name="Dubchak I."/>
            <person name="Noor M.A.F."/>
            <person name="Anderson W."/>
            <person name="White K.P."/>
            <person name="Clark A.G."/>
            <person name="Schaeffer S.W."/>
            <person name="Gelbart W.M."/>
            <person name="Weinstock G.M."/>
            <person name="Gibbs R.A."/>
        </authorList>
    </citation>
    <scope>NUCLEOTIDE SEQUENCE [LARGE SCALE GENOMIC DNA]</scope>
    <source>
        <strain>MV2-25 / Tucson 14011-0121.94</strain>
    </source>
</reference>
<dbReference type="EC" id="2.4.1.-" evidence="1"/>
<dbReference type="EMBL" id="CM000070">
    <property type="protein sequence ID" value="EAL27253.1"/>
    <property type="status" value="ALT_SEQ"/>
    <property type="molecule type" value="Genomic_DNA"/>
</dbReference>
<dbReference type="RefSeq" id="XP_001358116.1">
    <property type="nucleotide sequence ID" value="XM_001358079.3"/>
</dbReference>
<dbReference type="SMR" id="Q29AU6"/>
<dbReference type="FunCoup" id="Q29AU6">
    <property type="interactions" value="1913"/>
</dbReference>
<dbReference type="STRING" id="46245.Q29AU6"/>
<dbReference type="EnsemblMetazoa" id="FBtr0285031">
    <property type="protein sequence ID" value="FBpp0283469"/>
    <property type="gene ID" value="FBgn0076066"/>
</dbReference>
<dbReference type="GeneID" id="4800928"/>
<dbReference type="KEGG" id="dpo:4800928"/>
<dbReference type="CTD" id="326122"/>
<dbReference type="eggNOG" id="KOG2458">
    <property type="taxonomic scope" value="Eukaryota"/>
</dbReference>
<dbReference type="HOGENOM" id="CLU_041919_1_0_1"/>
<dbReference type="InParanoid" id="Q29AU6"/>
<dbReference type="OMA" id="EDDCMFP"/>
<dbReference type="PhylomeDB" id="Q29AU6"/>
<dbReference type="UniPathway" id="UPA00378"/>
<dbReference type="Proteomes" id="UP000001819">
    <property type="component" value="Chromosome 2"/>
</dbReference>
<dbReference type="Bgee" id="FBgn0076066">
    <property type="expression patterns" value="Expressed in female reproductive system and 2 other cell types or tissues"/>
</dbReference>
<dbReference type="GO" id="GO:0005788">
    <property type="term" value="C:endoplasmic reticulum lumen"/>
    <property type="evidence" value="ECO:0000250"/>
    <property type="project" value="UniProtKB"/>
</dbReference>
<dbReference type="GO" id="GO:0046527">
    <property type="term" value="F:glucosyltransferase activity"/>
    <property type="evidence" value="ECO:0000250"/>
    <property type="project" value="UniProtKB"/>
</dbReference>
<dbReference type="GO" id="GO:0035251">
    <property type="term" value="F:UDP-glucosyltransferase activity"/>
    <property type="evidence" value="ECO:0000250"/>
    <property type="project" value="UniProtKB"/>
</dbReference>
<dbReference type="GO" id="GO:0035252">
    <property type="term" value="F:UDP-xylosyltransferase activity"/>
    <property type="evidence" value="ECO:0007669"/>
    <property type="project" value="TreeGrafter"/>
</dbReference>
<dbReference type="GO" id="GO:0045746">
    <property type="term" value="P:negative regulation of Notch signaling pathway"/>
    <property type="evidence" value="ECO:0000250"/>
    <property type="project" value="UniProtKB"/>
</dbReference>
<dbReference type="GO" id="GO:0007219">
    <property type="term" value="P:Notch signaling pathway"/>
    <property type="evidence" value="ECO:0007669"/>
    <property type="project" value="UniProtKB-KW"/>
</dbReference>
<dbReference type="GO" id="GO:0045747">
    <property type="term" value="P:positive regulation of Notch signaling pathway"/>
    <property type="evidence" value="ECO:0007669"/>
    <property type="project" value="TreeGrafter"/>
</dbReference>
<dbReference type="GO" id="GO:0018242">
    <property type="term" value="P:protein O-linked glycosylation via serine"/>
    <property type="evidence" value="ECO:0000250"/>
    <property type="project" value="UniProtKB"/>
</dbReference>
<dbReference type="InterPro" id="IPR006598">
    <property type="entry name" value="CAP10"/>
</dbReference>
<dbReference type="InterPro" id="IPR051091">
    <property type="entry name" value="O-Glucosyltr/Glycosyltrsf_90"/>
</dbReference>
<dbReference type="PANTHER" id="PTHR12203">
    <property type="entry name" value="KDEL LYS-ASP-GLU-LEU CONTAINING - RELATED"/>
    <property type="match status" value="1"/>
</dbReference>
<dbReference type="PANTHER" id="PTHR12203:SF35">
    <property type="entry name" value="PROTEIN O-GLUCOSYLTRANSFERASE 1"/>
    <property type="match status" value="1"/>
</dbReference>
<dbReference type="Pfam" id="PF05686">
    <property type="entry name" value="Glyco_transf_90"/>
    <property type="match status" value="1"/>
</dbReference>
<dbReference type="SMART" id="SM00672">
    <property type="entry name" value="CAP10"/>
    <property type="match status" value="1"/>
</dbReference>
<dbReference type="PROSITE" id="PS00014">
    <property type="entry name" value="ER_TARGET"/>
    <property type="match status" value="1"/>
</dbReference>
<organism>
    <name type="scientific">Drosophila pseudoobscura pseudoobscura</name>
    <name type="common">Fruit fly</name>
    <dbReference type="NCBI Taxonomy" id="46245"/>
    <lineage>
        <taxon>Eukaryota</taxon>
        <taxon>Metazoa</taxon>
        <taxon>Ecdysozoa</taxon>
        <taxon>Arthropoda</taxon>
        <taxon>Hexapoda</taxon>
        <taxon>Insecta</taxon>
        <taxon>Pterygota</taxon>
        <taxon>Neoptera</taxon>
        <taxon>Endopterygota</taxon>
        <taxon>Diptera</taxon>
        <taxon>Brachycera</taxon>
        <taxon>Muscomorpha</taxon>
        <taxon>Ephydroidea</taxon>
        <taxon>Drosophilidae</taxon>
        <taxon>Drosophila</taxon>
        <taxon>Sophophora</taxon>
    </lineage>
</organism>
<comment type="function">
    <text evidence="1">Protein O-glucosyltransferase. Catalyzes the reaction that attaches glucose through an O-glycosidic linkage to a conserved serine residue found in the consensus sequence C-X-S-X-[PA]-C in epidermal growth factor-like repeats. Regulates Notch signaling by glucosylating Notch in the ER, glucosylation is required for the correct folding and cleavage of Notch.</text>
</comment>
<comment type="pathway">
    <text evidence="1">Protein modification; protein glycosylation.</text>
</comment>
<comment type="subcellular location">
    <subcellularLocation>
        <location evidence="1 3">Endoplasmic reticulum lumen</location>
    </subcellularLocation>
</comment>
<comment type="similarity">
    <text evidence="4">Belongs to the glycosyltransferase 90 family.</text>
</comment>
<comment type="sequence caution" evidence="4">
    <conflict type="erroneous gene model prediction">
        <sequence resource="EMBL-CDS" id="EAL27253"/>
    </conflict>
</comment>
<evidence type="ECO:0000250" key="1">
    <source>
        <dbReference type="UniProtKB" id="Q8T045"/>
    </source>
</evidence>
<evidence type="ECO:0000255" key="2"/>
<evidence type="ECO:0000255" key="3">
    <source>
        <dbReference type="PROSITE-ProRule" id="PRU10138"/>
    </source>
</evidence>
<evidence type="ECO:0000305" key="4"/>
<evidence type="ECO:0000312" key="5">
    <source>
        <dbReference type="EMBL" id="EAL27253.1"/>
    </source>
</evidence>
<accession>Q29AU6</accession>